<keyword id="KW-0004">4Fe-4S</keyword>
<keyword id="KW-0028">Amino-acid biosynthesis</keyword>
<keyword id="KW-0198">Cysteine biosynthesis</keyword>
<keyword id="KW-0349">Heme</keyword>
<keyword id="KW-0408">Iron</keyword>
<keyword id="KW-0411">Iron-sulfur</keyword>
<keyword id="KW-0479">Metal-binding</keyword>
<keyword id="KW-0521">NADP</keyword>
<keyword id="KW-0560">Oxidoreductase</keyword>
<keyword id="KW-1185">Reference proteome</keyword>
<organism>
    <name type="scientific">Shigella dysenteriae serotype 1 (strain Sd197)</name>
    <dbReference type="NCBI Taxonomy" id="300267"/>
    <lineage>
        <taxon>Bacteria</taxon>
        <taxon>Pseudomonadati</taxon>
        <taxon>Pseudomonadota</taxon>
        <taxon>Gammaproteobacteria</taxon>
        <taxon>Enterobacterales</taxon>
        <taxon>Enterobacteriaceae</taxon>
        <taxon>Shigella</taxon>
    </lineage>
</organism>
<gene>
    <name evidence="1" type="primary">cysI</name>
    <name type="ordered locus">SDY_2965</name>
</gene>
<accession>Q32CG4</accession>
<dbReference type="EC" id="1.8.1.2" evidence="1"/>
<dbReference type="EMBL" id="CP000034">
    <property type="protein sequence ID" value="ABB62991.1"/>
    <property type="molecule type" value="Genomic_DNA"/>
</dbReference>
<dbReference type="RefSeq" id="WP_001290733.1">
    <property type="nucleotide sequence ID" value="NC_007606.1"/>
</dbReference>
<dbReference type="RefSeq" id="YP_404482.1">
    <property type="nucleotide sequence ID" value="NC_007606.1"/>
</dbReference>
<dbReference type="SMR" id="Q32CG4"/>
<dbReference type="STRING" id="300267.SDY_2965"/>
<dbReference type="EnsemblBacteria" id="ABB62991">
    <property type="protein sequence ID" value="ABB62991"/>
    <property type="gene ID" value="SDY_2965"/>
</dbReference>
<dbReference type="KEGG" id="sdy:SDY_2965"/>
<dbReference type="PATRIC" id="fig|300267.13.peg.3557"/>
<dbReference type="HOGENOM" id="CLU_001975_3_2_6"/>
<dbReference type="UniPathway" id="UPA00140">
    <property type="reaction ID" value="UER00207"/>
</dbReference>
<dbReference type="Proteomes" id="UP000002716">
    <property type="component" value="Chromosome"/>
</dbReference>
<dbReference type="GO" id="GO:0009337">
    <property type="term" value="C:sulfite reductase complex (NADPH)"/>
    <property type="evidence" value="ECO:0007669"/>
    <property type="project" value="InterPro"/>
</dbReference>
<dbReference type="GO" id="GO:0051539">
    <property type="term" value="F:4 iron, 4 sulfur cluster binding"/>
    <property type="evidence" value="ECO:0007669"/>
    <property type="project" value="UniProtKB-KW"/>
</dbReference>
<dbReference type="GO" id="GO:0020037">
    <property type="term" value="F:heme binding"/>
    <property type="evidence" value="ECO:0007669"/>
    <property type="project" value="InterPro"/>
</dbReference>
<dbReference type="GO" id="GO:0046872">
    <property type="term" value="F:metal ion binding"/>
    <property type="evidence" value="ECO:0007669"/>
    <property type="project" value="UniProtKB-KW"/>
</dbReference>
<dbReference type="GO" id="GO:0050661">
    <property type="term" value="F:NADP binding"/>
    <property type="evidence" value="ECO:0007669"/>
    <property type="project" value="InterPro"/>
</dbReference>
<dbReference type="GO" id="GO:0050311">
    <property type="term" value="F:sulfite reductase (ferredoxin) activity"/>
    <property type="evidence" value="ECO:0007669"/>
    <property type="project" value="TreeGrafter"/>
</dbReference>
<dbReference type="GO" id="GO:0004783">
    <property type="term" value="F:sulfite reductase (NADPH) activity"/>
    <property type="evidence" value="ECO:0007669"/>
    <property type="project" value="UniProtKB-UniRule"/>
</dbReference>
<dbReference type="GO" id="GO:0019344">
    <property type="term" value="P:cysteine biosynthetic process"/>
    <property type="evidence" value="ECO:0007669"/>
    <property type="project" value="UniProtKB-KW"/>
</dbReference>
<dbReference type="GO" id="GO:0070814">
    <property type="term" value="P:hydrogen sulfide biosynthetic process"/>
    <property type="evidence" value="ECO:0007669"/>
    <property type="project" value="UniProtKB-UniRule"/>
</dbReference>
<dbReference type="GO" id="GO:0000103">
    <property type="term" value="P:sulfate assimilation"/>
    <property type="evidence" value="ECO:0007669"/>
    <property type="project" value="UniProtKB-UniRule"/>
</dbReference>
<dbReference type="FunFam" id="3.30.413.10:FF:000003">
    <property type="entry name" value="Sulfite reductase [NADPH] hemoprotein beta-component"/>
    <property type="match status" value="1"/>
</dbReference>
<dbReference type="FunFam" id="3.30.413.10:FF:000004">
    <property type="entry name" value="Sulfite reductase [NADPH] hemoprotein beta-component"/>
    <property type="match status" value="1"/>
</dbReference>
<dbReference type="Gene3D" id="3.30.413.10">
    <property type="entry name" value="Sulfite Reductase Hemoprotein, domain 1"/>
    <property type="match status" value="2"/>
</dbReference>
<dbReference type="HAMAP" id="MF_01540">
    <property type="entry name" value="CysI"/>
    <property type="match status" value="1"/>
</dbReference>
<dbReference type="InterPro" id="IPR011786">
    <property type="entry name" value="CysI"/>
</dbReference>
<dbReference type="InterPro" id="IPR005117">
    <property type="entry name" value="NiRdtase/SiRdtase_haem-b_fer"/>
</dbReference>
<dbReference type="InterPro" id="IPR036136">
    <property type="entry name" value="Nit/Sulf_reduc_fer-like_dom_sf"/>
</dbReference>
<dbReference type="InterPro" id="IPR006067">
    <property type="entry name" value="NO2/SO3_Rdtase_4Fe4S_dom"/>
</dbReference>
<dbReference type="InterPro" id="IPR045169">
    <property type="entry name" value="NO2/SO3_Rdtase_4Fe4S_prot"/>
</dbReference>
<dbReference type="InterPro" id="IPR045854">
    <property type="entry name" value="NO2/SO3_Rdtase_4Fe4S_sf"/>
</dbReference>
<dbReference type="InterPro" id="IPR006066">
    <property type="entry name" value="NO2/SO3_Rdtase_FeS/sirohaem_BS"/>
</dbReference>
<dbReference type="NCBIfam" id="TIGR02041">
    <property type="entry name" value="CysI"/>
    <property type="match status" value="1"/>
</dbReference>
<dbReference type="NCBIfam" id="NF010029">
    <property type="entry name" value="PRK13504.1"/>
    <property type="match status" value="1"/>
</dbReference>
<dbReference type="PANTHER" id="PTHR11493:SF47">
    <property type="entry name" value="SULFITE REDUCTASE [NADPH] SUBUNIT BETA"/>
    <property type="match status" value="1"/>
</dbReference>
<dbReference type="PANTHER" id="PTHR11493">
    <property type="entry name" value="SULFITE REDUCTASE [NADPH] SUBUNIT BETA-RELATED"/>
    <property type="match status" value="1"/>
</dbReference>
<dbReference type="Pfam" id="PF01077">
    <property type="entry name" value="NIR_SIR"/>
    <property type="match status" value="1"/>
</dbReference>
<dbReference type="Pfam" id="PF03460">
    <property type="entry name" value="NIR_SIR_ferr"/>
    <property type="match status" value="2"/>
</dbReference>
<dbReference type="PRINTS" id="PR00397">
    <property type="entry name" value="SIROHAEM"/>
</dbReference>
<dbReference type="SUPFAM" id="SSF56014">
    <property type="entry name" value="Nitrite and sulphite reductase 4Fe-4S domain-like"/>
    <property type="match status" value="2"/>
</dbReference>
<dbReference type="SUPFAM" id="SSF55124">
    <property type="entry name" value="Nitrite/Sulfite reductase N-terminal domain-like"/>
    <property type="match status" value="2"/>
</dbReference>
<dbReference type="PROSITE" id="PS00365">
    <property type="entry name" value="NIR_SIR"/>
    <property type="match status" value="1"/>
</dbReference>
<reference key="1">
    <citation type="journal article" date="2005" name="Nucleic Acids Res.">
        <title>Genome dynamics and diversity of Shigella species, the etiologic agents of bacillary dysentery.</title>
        <authorList>
            <person name="Yang F."/>
            <person name="Yang J."/>
            <person name="Zhang X."/>
            <person name="Chen L."/>
            <person name="Jiang Y."/>
            <person name="Yan Y."/>
            <person name="Tang X."/>
            <person name="Wang J."/>
            <person name="Xiong Z."/>
            <person name="Dong J."/>
            <person name="Xue Y."/>
            <person name="Zhu Y."/>
            <person name="Xu X."/>
            <person name="Sun L."/>
            <person name="Chen S."/>
            <person name="Nie H."/>
            <person name="Peng J."/>
            <person name="Xu J."/>
            <person name="Wang Y."/>
            <person name="Yuan Z."/>
            <person name="Wen Y."/>
            <person name="Yao Z."/>
            <person name="Shen Y."/>
            <person name="Qiang B."/>
            <person name="Hou Y."/>
            <person name="Yu J."/>
            <person name="Jin Q."/>
        </authorList>
    </citation>
    <scope>NUCLEOTIDE SEQUENCE [LARGE SCALE GENOMIC DNA]</scope>
    <source>
        <strain>Sd197</strain>
    </source>
</reference>
<comment type="function">
    <text evidence="1">Component of the sulfite reductase complex that catalyzes the 6-electron reduction of sulfite to sulfide. This is one of several activities required for the biosynthesis of L-cysteine from sulfate.</text>
</comment>
<comment type="catalytic activity">
    <reaction evidence="1">
        <text>hydrogen sulfide + 3 NADP(+) + 3 H2O = sulfite + 3 NADPH + 4 H(+)</text>
        <dbReference type="Rhea" id="RHEA:13801"/>
        <dbReference type="ChEBI" id="CHEBI:15377"/>
        <dbReference type="ChEBI" id="CHEBI:15378"/>
        <dbReference type="ChEBI" id="CHEBI:17359"/>
        <dbReference type="ChEBI" id="CHEBI:29919"/>
        <dbReference type="ChEBI" id="CHEBI:57783"/>
        <dbReference type="ChEBI" id="CHEBI:58349"/>
        <dbReference type="EC" id="1.8.1.2"/>
    </reaction>
</comment>
<comment type="cofactor">
    <cofactor evidence="1">
        <name>siroheme</name>
        <dbReference type="ChEBI" id="CHEBI:60052"/>
    </cofactor>
    <text evidence="1">Binds 1 siroheme per subunit.</text>
</comment>
<comment type="cofactor">
    <cofactor evidence="1">
        <name>[4Fe-4S] cluster</name>
        <dbReference type="ChEBI" id="CHEBI:49883"/>
    </cofactor>
    <text evidence="1">Binds 1 [4Fe-4S] cluster per subunit.</text>
</comment>
<comment type="pathway">
    <text evidence="1">Sulfur metabolism; hydrogen sulfide biosynthesis; hydrogen sulfide from sulfite (NADPH route): step 1/1.</text>
</comment>
<comment type="subunit">
    <text evidence="1">Alpha(8)-beta(8). The alpha component is a flavoprotein, the beta component is a hemoprotein.</text>
</comment>
<comment type="similarity">
    <text evidence="1">Belongs to the nitrite and sulfite reductase 4Fe-4S domain family.</text>
</comment>
<feature type="chain" id="PRO_1000068776" description="Sulfite reductase [NADPH] hemoprotein beta-component">
    <location>
        <begin position="1"/>
        <end position="570"/>
    </location>
</feature>
<feature type="binding site" evidence="1">
    <location>
        <position position="434"/>
    </location>
    <ligand>
        <name>[4Fe-4S] cluster</name>
        <dbReference type="ChEBI" id="CHEBI:49883"/>
    </ligand>
</feature>
<feature type="binding site" evidence="1">
    <location>
        <position position="440"/>
    </location>
    <ligand>
        <name>[4Fe-4S] cluster</name>
        <dbReference type="ChEBI" id="CHEBI:49883"/>
    </ligand>
</feature>
<feature type="binding site" evidence="1">
    <location>
        <position position="479"/>
    </location>
    <ligand>
        <name>[4Fe-4S] cluster</name>
        <dbReference type="ChEBI" id="CHEBI:49883"/>
    </ligand>
</feature>
<feature type="binding site" evidence="1">
    <location>
        <position position="483"/>
    </location>
    <ligand>
        <name>[4Fe-4S] cluster</name>
        <dbReference type="ChEBI" id="CHEBI:49883"/>
    </ligand>
</feature>
<feature type="binding site" description="axial binding residue" evidence="1">
    <location>
        <position position="483"/>
    </location>
    <ligand>
        <name>siroheme</name>
        <dbReference type="ChEBI" id="CHEBI:60052"/>
    </ligand>
    <ligandPart>
        <name>Fe</name>
        <dbReference type="ChEBI" id="CHEBI:18248"/>
    </ligandPart>
</feature>
<name>CYSI_SHIDS</name>
<protein>
    <recommendedName>
        <fullName evidence="1">Sulfite reductase [NADPH] hemoprotein beta-component</fullName>
        <shortName evidence="1">SiR-HP</shortName>
        <shortName evidence="1">SiRHP</shortName>
        <ecNumber evidence="1">1.8.1.2</ecNumber>
    </recommendedName>
</protein>
<evidence type="ECO:0000255" key="1">
    <source>
        <dbReference type="HAMAP-Rule" id="MF_01540"/>
    </source>
</evidence>
<proteinExistence type="inferred from homology"/>
<sequence length="570" mass="63954">MSEKHPGPLVVEGKLTDAERMKLESNYLRGTIAEDLNDGLTGGFKGDNVLLIRFHGMYQQDDRDIRAERAEQKLEPRHAMLLRCRLPGGVITTKQWQAIDKFAGENTIYGSIRLTNRQTFQFHGILKKNVKPVHQMLHSVGLDALATANDMNRNVLCTSNPYESQLHAEAYEWAKKISEHLLPRTRAYAEIWLDQEKVATTDEEPILGQTYLPRKFKTTVVIPPQNDIDLHANDMNFVAIAENGKLVGFNLLVGGGLSIEHGNKKTYARAASEFGYLPLEHTLAVAEAVVTTQRDWGNRTDRKNAKTKYTLERVGVETFKAEVERRAGIKFEPIRPYEFTGRGDRIGWVKGIDDNWHLTLFIENGRILDYPGRPLKTGLLEIAKIHKGDFRITANQNLIIAGVPESEKAKIEKIAKESGLMNAVTPQRENSMACVSFPTCPLAMAEAERFLPSFIDNIDNLMAKHGVSDEHIVMRVTGCPNGCGRAMLAEVGLVGKAPGRYNLHLGGNRIGTRIPRMYKENITEPEILASLDELIERWAKEREAGEGFGDFTVRAGIIRPVLDPARDLWD</sequence>